<feature type="chain" id="PRO_0000337864" description="Anti-adapter protein IraP">
    <location>
        <begin position="1"/>
        <end position="86"/>
    </location>
</feature>
<feature type="coiled-coil region" evidence="1">
    <location>
        <begin position="1"/>
        <end position="36"/>
    </location>
</feature>
<proteinExistence type="inferred from homology"/>
<organism>
    <name type="scientific">Shigella boydii serotype 4 (strain Sb227)</name>
    <dbReference type="NCBI Taxonomy" id="300268"/>
    <lineage>
        <taxon>Bacteria</taxon>
        <taxon>Pseudomonadati</taxon>
        <taxon>Pseudomonadota</taxon>
        <taxon>Gammaproteobacteria</taxon>
        <taxon>Enterobacterales</taxon>
        <taxon>Enterobacteriaceae</taxon>
        <taxon>Shigella</taxon>
    </lineage>
</organism>
<evidence type="ECO:0000255" key="1">
    <source>
        <dbReference type="HAMAP-Rule" id="MF_01198"/>
    </source>
</evidence>
<sequence length="86" mass="9917">MKNLIAELLLKLAQKEEESKELCAQVEALEIIVTAMLRNMAQNDQQRLIEQVEGALYEVKPDASIPDDDTELLRNYVKKLLKHPRQ</sequence>
<protein>
    <recommendedName>
        <fullName evidence="1">Anti-adapter protein IraP</fullName>
    </recommendedName>
</protein>
<comment type="function">
    <text evidence="1">Inhibits RpoS proteolysis by regulating RssB activity, thereby increasing the stability of the sigma stress factor RpoS especially during phosphate starvation, but also in stationary phase and during nitrogen starvation. Its effect on RpoS stability is due to its interaction with RssB, which probably blocks the interaction of RssB with RpoS, and the consequent delivery of the RssB-RpoS complex to the ClpXP protein degradation pathway.</text>
</comment>
<comment type="subunit">
    <text evidence="1">Interacts with RssB.</text>
</comment>
<comment type="subcellular location">
    <subcellularLocation>
        <location evidence="1">Cytoplasm</location>
    </subcellularLocation>
</comment>
<comment type="similarity">
    <text evidence="1">Belongs to the IraP family.</text>
</comment>
<name>IRAP_SHIBS</name>
<dbReference type="EMBL" id="CP000036">
    <property type="protein sequence ID" value="ABB64992.1"/>
    <property type="molecule type" value="Genomic_DNA"/>
</dbReference>
<dbReference type="RefSeq" id="WP_000792981.1">
    <property type="nucleotide sequence ID" value="NC_007613.1"/>
</dbReference>
<dbReference type="SMR" id="Q325L6"/>
<dbReference type="KEGG" id="sbo:SBO_0277"/>
<dbReference type="HOGENOM" id="CLU_169517_0_0_6"/>
<dbReference type="Proteomes" id="UP000007067">
    <property type="component" value="Chromosome"/>
</dbReference>
<dbReference type="GO" id="GO:0005737">
    <property type="term" value="C:cytoplasm"/>
    <property type="evidence" value="ECO:0007669"/>
    <property type="project" value="UniProtKB-SubCell"/>
</dbReference>
<dbReference type="GO" id="GO:0009267">
    <property type="term" value="P:cellular response to starvation"/>
    <property type="evidence" value="ECO:0007669"/>
    <property type="project" value="UniProtKB-UniRule"/>
</dbReference>
<dbReference type="HAMAP" id="MF_01198">
    <property type="entry name" value="Anti_adapt_IraP"/>
    <property type="match status" value="1"/>
</dbReference>
<dbReference type="InterPro" id="IPR019732">
    <property type="entry name" value="SigmaS_Anti-adapt_IraP"/>
</dbReference>
<dbReference type="NCBIfam" id="NF007598">
    <property type="entry name" value="PRK10244.1"/>
    <property type="match status" value="1"/>
</dbReference>
<dbReference type="Pfam" id="PF10796">
    <property type="entry name" value="Anti-adapt_IraP"/>
    <property type="match status" value="1"/>
</dbReference>
<keyword id="KW-0175">Coiled coil</keyword>
<keyword id="KW-0963">Cytoplasm</keyword>
<keyword id="KW-0346">Stress response</keyword>
<accession>Q325L6</accession>
<reference key="1">
    <citation type="journal article" date="2005" name="Nucleic Acids Res.">
        <title>Genome dynamics and diversity of Shigella species, the etiologic agents of bacillary dysentery.</title>
        <authorList>
            <person name="Yang F."/>
            <person name="Yang J."/>
            <person name="Zhang X."/>
            <person name="Chen L."/>
            <person name="Jiang Y."/>
            <person name="Yan Y."/>
            <person name="Tang X."/>
            <person name="Wang J."/>
            <person name="Xiong Z."/>
            <person name="Dong J."/>
            <person name="Xue Y."/>
            <person name="Zhu Y."/>
            <person name="Xu X."/>
            <person name="Sun L."/>
            <person name="Chen S."/>
            <person name="Nie H."/>
            <person name="Peng J."/>
            <person name="Xu J."/>
            <person name="Wang Y."/>
            <person name="Yuan Z."/>
            <person name="Wen Y."/>
            <person name="Yao Z."/>
            <person name="Shen Y."/>
            <person name="Qiang B."/>
            <person name="Hou Y."/>
            <person name="Yu J."/>
            <person name="Jin Q."/>
        </authorList>
    </citation>
    <scope>NUCLEOTIDE SEQUENCE [LARGE SCALE GENOMIC DNA]</scope>
    <source>
        <strain>Sb227</strain>
    </source>
</reference>
<gene>
    <name evidence="1" type="primary">iraP</name>
    <name type="ordered locus">SBO_0277</name>
</gene>